<evidence type="ECO:0000255" key="1">
    <source>
        <dbReference type="HAMAP-Rule" id="MF_01160"/>
    </source>
</evidence>
<sequence length="119" mass="13173">MSDSDAMTDPNAVSYSNAIVVLCTAPDEASAQNLAAQVLGEKLAACVTLLPGATSLYYWEGKLEQEYEVQLLFKSNTDHQQALLTYIKQHHPYQTPELLVLPVRDGDKDYLSWLNASLL</sequence>
<keyword id="KW-0186">Copper</keyword>
<keyword id="KW-0963">Cytoplasm</keyword>
<keyword id="KW-0479">Metal-binding</keyword>
<organism>
    <name type="scientific">Yersinia pestis bv. Antiqua (strain Angola)</name>
    <dbReference type="NCBI Taxonomy" id="349746"/>
    <lineage>
        <taxon>Bacteria</taxon>
        <taxon>Pseudomonadati</taxon>
        <taxon>Pseudomonadota</taxon>
        <taxon>Gammaproteobacteria</taxon>
        <taxon>Enterobacterales</taxon>
        <taxon>Yersiniaceae</taxon>
        <taxon>Yersinia</taxon>
    </lineage>
</organism>
<feature type="chain" id="PRO_1000137857" description="Divalent-cation tolerance protein CutA">
    <location>
        <begin position="1"/>
        <end position="119"/>
    </location>
</feature>
<feature type="binding site" evidence="1">
    <location>
        <position position="23"/>
    </location>
    <ligand>
        <name>Cu cation</name>
        <dbReference type="ChEBI" id="CHEBI:23378"/>
    </ligand>
</feature>
<feature type="binding site" evidence="1">
    <location>
        <position position="90"/>
    </location>
    <ligand>
        <name>Cu cation</name>
        <dbReference type="ChEBI" id="CHEBI:23378"/>
    </ligand>
</feature>
<feature type="binding site" evidence="1">
    <location>
        <position position="91"/>
    </location>
    <ligand>
        <name>Cu cation</name>
        <dbReference type="ChEBI" id="CHEBI:23378"/>
    </ligand>
</feature>
<protein>
    <recommendedName>
        <fullName evidence="1">Divalent-cation tolerance protein CutA</fullName>
    </recommendedName>
</protein>
<proteinExistence type="inferred from homology"/>
<reference key="1">
    <citation type="journal article" date="2010" name="J. Bacteriol.">
        <title>Genome sequence of the deep-rooted Yersinia pestis strain Angola reveals new insights into the evolution and pangenome of the plague bacterium.</title>
        <authorList>
            <person name="Eppinger M."/>
            <person name="Worsham P.L."/>
            <person name="Nikolich M.P."/>
            <person name="Riley D.R."/>
            <person name="Sebastian Y."/>
            <person name="Mou S."/>
            <person name="Achtman M."/>
            <person name="Lindler L.E."/>
            <person name="Ravel J."/>
        </authorList>
    </citation>
    <scope>NUCLEOTIDE SEQUENCE [LARGE SCALE GENOMIC DNA]</scope>
    <source>
        <strain>Angola</strain>
    </source>
</reference>
<dbReference type="EMBL" id="CP000901">
    <property type="protein sequence ID" value="ABX88504.1"/>
    <property type="molecule type" value="Genomic_DNA"/>
</dbReference>
<dbReference type="RefSeq" id="WP_002209122.1">
    <property type="nucleotide sequence ID" value="NZ_CP009935.1"/>
</dbReference>
<dbReference type="SMR" id="A9QYQ6"/>
<dbReference type="GeneID" id="57974262"/>
<dbReference type="KEGG" id="ypg:YpAngola_A0727"/>
<dbReference type="GO" id="GO:0005737">
    <property type="term" value="C:cytoplasm"/>
    <property type="evidence" value="ECO:0007669"/>
    <property type="project" value="UniProtKB-SubCell"/>
</dbReference>
<dbReference type="GO" id="GO:0005507">
    <property type="term" value="F:copper ion binding"/>
    <property type="evidence" value="ECO:0007669"/>
    <property type="project" value="UniProtKB-UniRule"/>
</dbReference>
<dbReference type="GO" id="GO:0010038">
    <property type="term" value="P:response to metal ion"/>
    <property type="evidence" value="ECO:0007669"/>
    <property type="project" value="InterPro"/>
</dbReference>
<dbReference type="FunFam" id="3.30.70.120:FF:000004">
    <property type="entry name" value="Divalent-cation tolerance protein CutA"/>
    <property type="match status" value="1"/>
</dbReference>
<dbReference type="Gene3D" id="3.30.70.120">
    <property type="match status" value="1"/>
</dbReference>
<dbReference type="HAMAP" id="MF_01160">
    <property type="entry name" value="CutA"/>
    <property type="match status" value="1"/>
</dbReference>
<dbReference type="InterPro" id="IPR023700">
    <property type="entry name" value="CutA_Enterobact"/>
</dbReference>
<dbReference type="InterPro" id="IPR004323">
    <property type="entry name" value="Ion_tolerance_CutA"/>
</dbReference>
<dbReference type="InterPro" id="IPR011322">
    <property type="entry name" value="N-reg_PII-like_a/b"/>
</dbReference>
<dbReference type="InterPro" id="IPR015867">
    <property type="entry name" value="N-reg_PII/ATP_PRibTrfase_C"/>
</dbReference>
<dbReference type="NCBIfam" id="NF007930">
    <property type="entry name" value="PRK10645.1"/>
    <property type="match status" value="1"/>
</dbReference>
<dbReference type="PANTHER" id="PTHR23419">
    <property type="entry name" value="DIVALENT CATION TOLERANCE CUTA-RELATED"/>
    <property type="match status" value="1"/>
</dbReference>
<dbReference type="PANTHER" id="PTHR23419:SF8">
    <property type="entry name" value="FI09726P"/>
    <property type="match status" value="1"/>
</dbReference>
<dbReference type="Pfam" id="PF03091">
    <property type="entry name" value="CutA1"/>
    <property type="match status" value="1"/>
</dbReference>
<dbReference type="SUPFAM" id="SSF54913">
    <property type="entry name" value="GlnB-like"/>
    <property type="match status" value="1"/>
</dbReference>
<gene>
    <name evidence="1" type="primary">cutA</name>
    <name type="ordered locus">YpAngola_A0727</name>
</gene>
<accession>A9QYQ6</accession>
<name>CUTA_YERPG</name>
<comment type="function">
    <text evidence="1">Involved in resistance toward heavy metals.</text>
</comment>
<comment type="cofactor">
    <cofactor evidence="1">
        <name>Cu cation</name>
        <dbReference type="ChEBI" id="CHEBI:23378"/>
    </cofactor>
    <text evidence="1">Binds 1 copper ion per subunit.</text>
</comment>
<comment type="subunit">
    <text evidence="1">Homotrimer.</text>
</comment>
<comment type="subcellular location">
    <subcellularLocation>
        <location evidence="1">Cytoplasm</location>
    </subcellularLocation>
</comment>
<comment type="similarity">
    <text evidence="1">Belongs to the CutA family.</text>
</comment>